<name>XERC_MYCSJ</name>
<evidence type="ECO:0000255" key="1">
    <source>
        <dbReference type="HAMAP-Rule" id="MF_01808"/>
    </source>
</evidence>
<evidence type="ECO:0000255" key="2">
    <source>
        <dbReference type="PROSITE-ProRule" id="PRU01246"/>
    </source>
</evidence>
<evidence type="ECO:0000255" key="3">
    <source>
        <dbReference type="PROSITE-ProRule" id="PRU01248"/>
    </source>
</evidence>
<sequence length="300" mass="32426">MESVLDAFDQYLALERGRSDHTRRAYLGDLRSLFAFVDERTPGADLGSLTLPVLRAWLSAQAAAGTARTTLARRTSAVKTFTAWAVRRGLMASDPATRLQMPKARRTLPAVLRQDQARDALDAANSGAQQGDPLALRDRLIVEMLYATGIRVSELCGLDIDDVDTSRRLLRVLGKGDKQRTVPFGEPAEQALRAWLTSGRPALATAESGPALLLGARGRRLDPRQARTVVHETVGAVAGAPDIGPHGLRHSAATHLLEGGADLRIVQELLGHSTLATTQLYTHVTVARLRAVHDQAHPRA</sequence>
<comment type="function">
    <text evidence="1">Site-specific tyrosine recombinase, which acts by catalyzing the cutting and rejoining of the recombining DNA molecules. The XerC-XerD complex is essential to convert dimers of the bacterial chromosome into monomers to permit their segregation at cell division. It also contributes to the segregational stability of plasmids.</text>
</comment>
<comment type="subunit">
    <text evidence="1">Forms a cyclic heterotetrameric complex composed of two molecules of XerC and two molecules of XerD.</text>
</comment>
<comment type="subcellular location">
    <subcellularLocation>
        <location evidence="1">Cytoplasm</location>
    </subcellularLocation>
</comment>
<comment type="similarity">
    <text evidence="1">Belongs to the 'phage' integrase family. XerC subfamily.</text>
</comment>
<keyword id="KW-0131">Cell cycle</keyword>
<keyword id="KW-0132">Cell division</keyword>
<keyword id="KW-0159">Chromosome partition</keyword>
<keyword id="KW-0963">Cytoplasm</keyword>
<keyword id="KW-0229">DNA integration</keyword>
<keyword id="KW-0233">DNA recombination</keyword>
<keyword id="KW-0238">DNA-binding</keyword>
<reference key="1">
    <citation type="submission" date="2007-02" db="EMBL/GenBank/DDBJ databases">
        <title>Complete sequence of Mycobacterium sp. JLS.</title>
        <authorList>
            <consortium name="US DOE Joint Genome Institute"/>
            <person name="Copeland A."/>
            <person name="Lucas S."/>
            <person name="Lapidus A."/>
            <person name="Barry K."/>
            <person name="Detter J.C."/>
            <person name="Glavina del Rio T."/>
            <person name="Hammon N."/>
            <person name="Israni S."/>
            <person name="Dalin E."/>
            <person name="Tice H."/>
            <person name="Pitluck S."/>
            <person name="Chain P."/>
            <person name="Malfatti S."/>
            <person name="Shin M."/>
            <person name="Vergez L."/>
            <person name="Schmutz J."/>
            <person name="Larimer F."/>
            <person name="Land M."/>
            <person name="Hauser L."/>
            <person name="Kyrpides N."/>
            <person name="Mikhailova N."/>
            <person name="Miller C.D."/>
            <person name="Anderson A.J."/>
            <person name="Sims R.C."/>
            <person name="Richardson P."/>
        </authorList>
    </citation>
    <scope>NUCLEOTIDE SEQUENCE [LARGE SCALE GENOMIC DNA]</scope>
    <source>
        <strain>JLS</strain>
    </source>
</reference>
<proteinExistence type="inferred from homology"/>
<feature type="chain" id="PRO_1000070014" description="Tyrosine recombinase XerC">
    <location>
        <begin position="1"/>
        <end position="300"/>
    </location>
</feature>
<feature type="domain" description="Core-binding (CB)" evidence="3">
    <location>
        <begin position="1"/>
        <end position="86"/>
    </location>
</feature>
<feature type="domain" description="Tyr recombinase" evidence="2">
    <location>
        <begin position="107"/>
        <end position="294"/>
    </location>
</feature>
<feature type="active site" evidence="1">
    <location>
        <position position="151"/>
    </location>
</feature>
<feature type="active site" evidence="1">
    <location>
        <position position="175"/>
    </location>
</feature>
<feature type="active site" evidence="1">
    <location>
        <position position="246"/>
    </location>
</feature>
<feature type="active site" evidence="1">
    <location>
        <position position="249"/>
    </location>
</feature>
<feature type="active site" evidence="1">
    <location>
        <position position="272"/>
    </location>
</feature>
<feature type="active site" description="O-(3'-phospho-DNA)-tyrosine intermediate" evidence="1">
    <location>
        <position position="281"/>
    </location>
</feature>
<protein>
    <recommendedName>
        <fullName evidence="1">Tyrosine recombinase XerC</fullName>
    </recommendedName>
</protein>
<accession>A3PXY1</accession>
<gene>
    <name evidence="1" type="primary">xerC</name>
    <name type="ordered locus">Mjls_1970</name>
</gene>
<organism>
    <name type="scientific">Mycobacterium sp. (strain JLS)</name>
    <dbReference type="NCBI Taxonomy" id="164757"/>
    <lineage>
        <taxon>Bacteria</taxon>
        <taxon>Bacillati</taxon>
        <taxon>Actinomycetota</taxon>
        <taxon>Actinomycetes</taxon>
        <taxon>Mycobacteriales</taxon>
        <taxon>Mycobacteriaceae</taxon>
        <taxon>Mycobacterium</taxon>
    </lineage>
</organism>
<dbReference type="EMBL" id="CP000580">
    <property type="protein sequence ID" value="ABN97758.1"/>
    <property type="molecule type" value="Genomic_DNA"/>
</dbReference>
<dbReference type="SMR" id="A3PXY1"/>
<dbReference type="KEGG" id="mjl:Mjls_1970"/>
<dbReference type="HOGENOM" id="CLU_027562_9_0_11"/>
<dbReference type="BioCyc" id="MSP164757:G1G8C-1990-MONOMER"/>
<dbReference type="GO" id="GO:0005737">
    <property type="term" value="C:cytoplasm"/>
    <property type="evidence" value="ECO:0007669"/>
    <property type="project" value="UniProtKB-SubCell"/>
</dbReference>
<dbReference type="GO" id="GO:0003677">
    <property type="term" value="F:DNA binding"/>
    <property type="evidence" value="ECO:0007669"/>
    <property type="project" value="UniProtKB-KW"/>
</dbReference>
<dbReference type="GO" id="GO:0009037">
    <property type="term" value="F:tyrosine-based site-specific recombinase activity"/>
    <property type="evidence" value="ECO:0007669"/>
    <property type="project" value="UniProtKB-UniRule"/>
</dbReference>
<dbReference type="GO" id="GO:0051301">
    <property type="term" value="P:cell division"/>
    <property type="evidence" value="ECO:0007669"/>
    <property type="project" value="UniProtKB-KW"/>
</dbReference>
<dbReference type="GO" id="GO:0007059">
    <property type="term" value="P:chromosome segregation"/>
    <property type="evidence" value="ECO:0007669"/>
    <property type="project" value="UniProtKB-UniRule"/>
</dbReference>
<dbReference type="GO" id="GO:0006313">
    <property type="term" value="P:DNA transposition"/>
    <property type="evidence" value="ECO:0007669"/>
    <property type="project" value="UniProtKB-UniRule"/>
</dbReference>
<dbReference type="CDD" id="cd00798">
    <property type="entry name" value="INT_XerDC_C"/>
    <property type="match status" value="1"/>
</dbReference>
<dbReference type="Gene3D" id="1.10.150.130">
    <property type="match status" value="1"/>
</dbReference>
<dbReference type="Gene3D" id="1.10.443.10">
    <property type="entry name" value="Intergrase catalytic core"/>
    <property type="match status" value="1"/>
</dbReference>
<dbReference type="HAMAP" id="MF_01808">
    <property type="entry name" value="Recomb_XerC_XerD"/>
    <property type="match status" value="1"/>
</dbReference>
<dbReference type="InterPro" id="IPR044068">
    <property type="entry name" value="CB"/>
</dbReference>
<dbReference type="InterPro" id="IPR011010">
    <property type="entry name" value="DNA_brk_join_enz"/>
</dbReference>
<dbReference type="InterPro" id="IPR013762">
    <property type="entry name" value="Integrase-like_cat_sf"/>
</dbReference>
<dbReference type="InterPro" id="IPR002104">
    <property type="entry name" value="Integrase_catalytic"/>
</dbReference>
<dbReference type="InterPro" id="IPR010998">
    <property type="entry name" value="Integrase_recombinase_N"/>
</dbReference>
<dbReference type="InterPro" id="IPR004107">
    <property type="entry name" value="Integrase_SAM-like_N"/>
</dbReference>
<dbReference type="InterPro" id="IPR023009">
    <property type="entry name" value="Tyrosine_recombinase_XerC/XerD"/>
</dbReference>
<dbReference type="InterPro" id="IPR050090">
    <property type="entry name" value="Tyrosine_recombinase_XerCD"/>
</dbReference>
<dbReference type="NCBIfam" id="NF001399">
    <property type="entry name" value="PRK00283.1"/>
    <property type="match status" value="1"/>
</dbReference>
<dbReference type="PANTHER" id="PTHR30349">
    <property type="entry name" value="PHAGE INTEGRASE-RELATED"/>
    <property type="match status" value="1"/>
</dbReference>
<dbReference type="PANTHER" id="PTHR30349:SF77">
    <property type="entry name" value="TYROSINE RECOMBINASE XERC"/>
    <property type="match status" value="1"/>
</dbReference>
<dbReference type="Pfam" id="PF02899">
    <property type="entry name" value="Phage_int_SAM_1"/>
    <property type="match status" value="1"/>
</dbReference>
<dbReference type="Pfam" id="PF00589">
    <property type="entry name" value="Phage_integrase"/>
    <property type="match status" value="1"/>
</dbReference>
<dbReference type="SUPFAM" id="SSF56349">
    <property type="entry name" value="DNA breaking-rejoining enzymes"/>
    <property type="match status" value="1"/>
</dbReference>
<dbReference type="PROSITE" id="PS51900">
    <property type="entry name" value="CB"/>
    <property type="match status" value="1"/>
</dbReference>
<dbReference type="PROSITE" id="PS51898">
    <property type="entry name" value="TYR_RECOMBINASE"/>
    <property type="match status" value="1"/>
</dbReference>